<accession>B7NC64</accession>
<protein>
    <recommendedName>
        <fullName evidence="1">1-(5-phosphoribosyl)-5-[(5-phosphoribosylamino)methylideneamino] imidazole-4-carboxamide isomerase</fullName>
        <ecNumber evidence="1">5.3.1.16</ecNumber>
    </recommendedName>
    <alternativeName>
        <fullName evidence="1">Phosphoribosylformimino-5-aminoimidazole carboxamide ribotide isomerase</fullName>
    </alternativeName>
</protein>
<dbReference type="EC" id="5.3.1.16" evidence="1"/>
<dbReference type="EMBL" id="CU928163">
    <property type="protein sequence ID" value="CAR13554.1"/>
    <property type="molecule type" value="Genomic_DNA"/>
</dbReference>
<dbReference type="RefSeq" id="WP_000586453.1">
    <property type="nucleotide sequence ID" value="NC_011751.1"/>
</dbReference>
<dbReference type="RefSeq" id="YP_002413082.1">
    <property type="nucleotide sequence ID" value="NC_011751.1"/>
</dbReference>
<dbReference type="SMR" id="B7NC64"/>
<dbReference type="STRING" id="585056.ECUMN_2366"/>
<dbReference type="KEGG" id="eum:ECUMN_2366"/>
<dbReference type="PATRIC" id="fig|585056.7.peg.2547"/>
<dbReference type="HOGENOM" id="CLU_048577_1_2_6"/>
<dbReference type="UniPathway" id="UPA00031">
    <property type="reaction ID" value="UER00009"/>
</dbReference>
<dbReference type="Proteomes" id="UP000007097">
    <property type="component" value="Chromosome"/>
</dbReference>
<dbReference type="GO" id="GO:0005737">
    <property type="term" value="C:cytoplasm"/>
    <property type="evidence" value="ECO:0007669"/>
    <property type="project" value="UniProtKB-SubCell"/>
</dbReference>
<dbReference type="GO" id="GO:0003949">
    <property type="term" value="F:1-(5-phosphoribosyl)-5-[(5-phosphoribosylamino)methylideneamino]imidazole-4-carboxamide isomerase activity"/>
    <property type="evidence" value="ECO:0007669"/>
    <property type="project" value="UniProtKB-UniRule"/>
</dbReference>
<dbReference type="GO" id="GO:0000105">
    <property type="term" value="P:L-histidine biosynthetic process"/>
    <property type="evidence" value="ECO:0007669"/>
    <property type="project" value="UniProtKB-UniRule"/>
</dbReference>
<dbReference type="GO" id="GO:0000162">
    <property type="term" value="P:L-tryptophan biosynthetic process"/>
    <property type="evidence" value="ECO:0007669"/>
    <property type="project" value="TreeGrafter"/>
</dbReference>
<dbReference type="CDD" id="cd04732">
    <property type="entry name" value="HisA"/>
    <property type="match status" value="1"/>
</dbReference>
<dbReference type="FunFam" id="3.20.20.70:FF:000009">
    <property type="entry name" value="1-(5-phosphoribosyl)-5-[(5-phosphoribosylamino)methylideneamino] imidazole-4-carboxamide isomerase"/>
    <property type="match status" value="1"/>
</dbReference>
<dbReference type="Gene3D" id="3.20.20.70">
    <property type="entry name" value="Aldolase class I"/>
    <property type="match status" value="1"/>
</dbReference>
<dbReference type="HAMAP" id="MF_01014">
    <property type="entry name" value="HisA"/>
    <property type="match status" value="1"/>
</dbReference>
<dbReference type="InterPro" id="IPR013785">
    <property type="entry name" value="Aldolase_TIM"/>
</dbReference>
<dbReference type="InterPro" id="IPR006062">
    <property type="entry name" value="His_biosynth"/>
</dbReference>
<dbReference type="InterPro" id="IPR006063">
    <property type="entry name" value="HisA_bact_arch"/>
</dbReference>
<dbReference type="InterPro" id="IPR044524">
    <property type="entry name" value="Isoase_HisA-like"/>
</dbReference>
<dbReference type="InterPro" id="IPR023016">
    <property type="entry name" value="Isoase_HisA-like_bact"/>
</dbReference>
<dbReference type="InterPro" id="IPR011060">
    <property type="entry name" value="RibuloseP-bd_barrel"/>
</dbReference>
<dbReference type="NCBIfam" id="TIGR00007">
    <property type="entry name" value="1-(5-phosphoribosyl)-5-[(5-phosphoribosylamino)methylideneamino]imidazole-4-carboxamide isomerase"/>
    <property type="match status" value="1"/>
</dbReference>
<dbReference type="PANTHER" id="PTHR43090">
    <property type="entry name" value="1-(5-PHOSPHORIBOSYL)-5-[(5-PHOSPHORIBOSYLAMINO)METHYLIDENEAMINO] IMIDAZOLE-4-CARBOXAMIDE ISOMERASE"/>
    <property type="match status" value="1"/>
</dbReference>
<dbReference type="PANTHER" id="PTHR43090:SF2">
    <property type="entry name" value="1-(5-PHOSPHORIBOSYL)-5-[(5-PHOSPHORIBOSYLAMINO)METHYLIDENEAMINO] IMIDAZOLE-4-CARBOXAMIDE ISOMERASE"/>
    <property type="match status" value="1"/>
</dbReference>
<dbReference type="Pfam" id="PF00977">
    <property type="entry name" value="His_biosynth"/>
    <property type="match status" value="1"/>
</dbReference>
<dbReference type="SUPFAM" id="SSF51366">
    <property type="entry name" value="Ribulose-phoshate binding barrel"/>
    <property type="match status" value="1"/>
</dbReference>
<gene>
    <name evidence="1" type="primary">hisA</name>
    <name type="ordered locus">ECUMN_2366</name>
</gene>
<keyword id="KW-0028">Amino-acid biosynthesis</keyword>
<keyword id="KW-0963">Cytoplasm</keyword>
<keyword id="KW-0368">Histidine biosynthesis</keyword>
<keyword id="KW-0413">Isomerase</keyword>
<sequence length="245" mass="26032">MIIPALDLIDGTVVRLHQGDYGKQRDYGNDPLPRLQDYAAQGAEVLHLVDLTGAKDPAKRQIPLIKTLVAGVNVPVQVGGGVRSEEDVAALLEAGVARVVVGSTAVKSPEMVKGWFERFGADALVLALDVRIDEQGNKQVAVSGWQENSGVSLEQLVETYLPVGLKHVLCTDISRDGTLAGSNVSLYEEVCARYPQVAFQSSGGIGNINDVAAMRGTGVRGVIVGRALLEGKFTVKEAIACWQNA</sequence>
<comment type="catalytic activity">
    <reaction evidence="1">
        <text>1-(5-phospho-beta-D-ribosyl)-5-[(5-phospho-beta-D-ribosylamino)methylideneamino]imidazole-4-carboxamide = 5-[(5-phospho-1-deoxy-D-ribulos-1-ylimino)methylamino]-1-(5-phospho-beta-D-ribosyl)imidazole-4-carboxamide</text>
        <dbReference type="Rhea" id="RHEA:15469"/>
        <dbReference type="ChEBI" id="CHEBI:58435"/>
        <dbReference type="ChEBI" id="CHEBI:58525"/>
        <dbReference type="EC" id="5.3.1.16"/>
    </reaction>
</comment>
<comment type="pathway">
    <text evidence="1">Amino-acid biosynthesis; L-histidine biosynthesis; L-histidine from 5-phospho-alpha-D-ribose 1-diphosphate: step 4/9.</text>
</comment>
<comment type="subcellular location">
    <subcellularLocation>
        <location evidence="1">Cytoplasm</location>
    </subcellularLocation>
</comment>
<comment type="similarity">
    <text evidence="1">Belongs to the HisA/HisF family.</text>
</comment>
<evidence type="ECO:0000255" key="1">
    <source>
        <dbReference type="HAMAP-Rule" id="MF_01014"/>
    </source>
</evidence>
<organism>
    <name type="scientific">Escherichia coli O17:K52:H18 (strain UMN026 / ExPEC)</name>
    <dbReference type="NCBI Taxonomy" id="585056"/>
    <lineage>
        <taxon>Bacteria</taxon>
        <taxon>Pseudomonadati</taxon>
        <taxon>Pseudomonadota</taxon>
        <taxon>Gammaproteobacteria</taxon>
        <taxon>Enterobacterales</taxon>
        <taxon>Enterobacteriaceae</taxon>
        <taxon>Escherichia</taxon>
    </lineage>
</organism>
<name>HIS4_ECOLU</name>
<reference key="1">
    <citation type="journal article" date="2009" name="PLoS Genet.">
        <title>Organised genome dynamics in the Escherichia coli species results in highly diverse adaptive paths.</title>
        <authorList>
            <person name="Touchon M."/>
            <person name="Hoede C."/>
            <person name="Tenaillon O."/>
            <person name="Barbe V."/>
            <person name="Baeriswyl S."/>
            <person name="Bidet P."/>
            <person name="Bingen E."/>
            <person name="Bonacorsi S."/>
            <person name="Bouchier C."/>
            <person name="Bouvet O."/>
            <person name="Calteau A."/>
            <person name="Chiapello H."/>
            <person name="Clermont O."/>
            <person name="Cruveiller S."/>
            <person name="Danchin A."/>
            <person name="Diard M."/>
            <person name="Dossat C."/>
            <person name="Karoui M.E."/>
            <person name="Frapy E."/>
            <person name="Garry L."/>
            <person name="Ghigo J.M."/>
            <person name="Gilles A.M."/>
            <person name="Johnson J."/>
            <person name="Le Bouguenec C."/>
            <person name="Lescat M."/>
            <person name="Mangenot S."/>
            <person name="Martinez-Jehanne V."/>
            <person name="Matic I."/>
            <person name="Nassif X."/>
            <person name="Oztas S."/>
            <person name="Petit M.A."/>
            <person name="Pichon C."/>
            <person name="Rouy Z."/>
            <person name="Ruf C.S."/>
            <person name="Schneider D."/>
            <person name="Tourret J."/>
            <person name="Vacherie B."/>
            <person name="Vallenet D."/>
            <person name="Medigue C."/>
            <person name="Rocha E.P.C."/>
            <person name="Denamur E."/>
        </authorList>
    </citation>
    <scope>NUCLEOTIDE SEQUENCE [LARGE SCALE GENOMIC DNA]</scope>
    <source>
        <strain>UMN026 / ExPEC</strain>
    </source>
</reference>
<proteinExistence type="inferred from homology"/>
<feature type="chain" id="PRO_1000135113" description="1-(5-phosphoribosyl)-5-[(5-phosphoribosylamino)methylideneamino] imidazole-4-carboxamide isomerase">
    <location>
        <begin position="1"/>
        <end position="245"/>
    </location>
</feature>
<feature type="active site" description="Proton acceptor" evidence="1">
    <location>
        <position position="7"/>
    </location>
</feature>
<feature type="active site" description="Proton donor" evidence="1">
    <location>
        <position position="129"/>
    </location>
</feature>